<accession>Q9JXB3</accession>
<gene>
    <name evidence="1" type="primary">prfB</name>
    <name type="ordered locus">NMB2138</name>
</gene>
<comment type="function">
    <text evidence="1">Peptide chain release factor 2 directs the termination of translation in response to the peptide chain termination codons UGA and UAA.</text>
</comment>
<comment type="subcellular location">
    <subcellularLocation>
        <location evidence="1">Cytoplasm</location>
    </subcellularLocation>
</comment>
<comment type="PTM">
    <text evidence="1">Methylated by PrmC. Methylation increases the termination efficiency of RF2.</text>
</comment>
<comment type="similarity">
    <text evidence="1">Belongs to the prokaryotic/mitochondrial release factor family.</text>
</comment>
<evidence type="ECO:0000255" key="1">
    <source>
        <dbReference type="HAMAP-Rule" id="MF_00094"/>
    </source>
</evidence>
<organism>
    <name type="scientific">Neisseria meningitidis serogroup B (strain ATCC BAA-335 / MC58)</name>
    <dbReference type="NCBI Taxonomy" id="122586"/>
    <lineage>
        <taxon>Bacteria</taxon>
        <taxon>Pseudomonadati</taxon>
        <taxon>Pseudomonadota</taxon>
        <taxon>Betaproteobacteria</taxon>
        <taxon>Neisseriales</taxon>
        <taxon>Neisseriaceae</taxon>
        <taxon>Neisseria</taxon>
    </lineage>
</organism>
<keyword id="KW-0963">Cytoplasm</keyword>
<keyword id="KW-0488">Methylation</keyword>
<keyword id="KW-0648">Protein biosynthesis</keyword>
<keyword id="KW-1185">Reference proteome</keyword>
<sequence>MEAEVINQLNNTLNDLEKRSEDIRVYMDYQGKKDRLEEVIGLSEDPELWNDPKRAQEIGKERKILEGIVLTLDNIASGIEDNRMLIEMTVEENDEEGFAAVQEDVAGLEKQMADLEFKRMFNQPADPNNCFIDITAGAGGTEAEDWAGMLFRMYSRYAERKGFRIEILEEDDGEIAGINRATIRVEGEYAYGLLRTETGVHRLVRYSPFDSNNKRHTSFASVFVYPEIDDSIEIEINPADLRIDTYRASGAGGQHINKTDSAVRITHEPTGIVVQCQNDRSQHANKAAAMEMLKSKLYELEMRKRNEEKQALEEGKSDVGWGSQIRSYVLDSSRIKDLRTGYEVGNTKAVLDGDLDGFIEASLKQGV</sequence>
<protein>
    <recommendedName>
        <fullName evidence="1">Peptide chain release factor 2</fullName>
        <shortName evidence="1">RF-2</shortName>
    </recommendedName>
</protein>
<dbReference type="EMBL" id="AE002098">
    <property type="protein sequence ID" value="AAF42446.1"/>
    <property type="molecule type" value="Genomic_DNA"/>
</dbReference>
<dbReference type="PIR" id="H81001">
    <property type="entry name" value="H81001"/>
</dbReference>
<dbReference type="RefSeq" id="NP_275123.1">
    <property type="nucleotide sequence ID" value="NC_003112.2"/>
</dbReference>
<dbReference type="RefSeq" id="WP_002225736.1">
    <property type="nucleotide sequence ID" value="NC_003112.2"/>
</dbReference>
<dbReference type="SMR" id="Q9JXB3"/>
<dbReference type="FunCoup" id="Q9JXB3">
    <property type="interactions" value="468"/>
</dbReference>
<dbReference type="STRING" id="122586.NMB2138"/>
<dbReference type="PaxDb" id="122586-NMB2138"/>
<dbReference type="KEGG" id="nme:NMB2138"/>
<dbReference type="PATRIC" id="fig|122586.8.peg.2729"/>
<dbReference type="HOGENOM" id="CLU_036856_6_0_4"/>
<dbReference type="InParanoid" id="Q9JXB3"/>
<dbReference type="OrthoDB" id="9806673at2"/>
<dbReference type="Proteomes" id="UP000000425">
    <property type="component" value="Chromosome"/>
</dbReference>
<dbReference type="GO" id="GO:0005737">
    <property type="term" value="C:cytoplasm"/>
    <property type="evidence" value="ECO:0007669"/>
    <property type="project" value="UniProtKB-SubCell"/>
</dbReference>
<dbReference type="GO" id="GO:0016149">
    <property type="term" value="F:translation release factor activity, codon specific"/>
    <property type="evidence" value="ECO:0007669"/>
    <property type="project" value="UniProtKB-UniRule"/>
</dbReference>
<dbReference type="FunFam" id="3.30.160.20:FF:000010">
    <property type="entry name" value="Peptide chain release factor 2"/>
    <property type="match status" value="1"/>
</dbReference>
<dbReference type="Gene3D" id="3.30.160.20">
    <property type="match status" value="1"/>
</dbReference>
<dbReference type="Gene3D" id="3.30.70.1660">
    <property type="match status" value="1"/>
</dbReference>
<dbReference type="Gene3D" id="1.20.58.410">
    <property type="entry name" value="Release factor"/>
    <property type="match status" value="1"/>
</dbReference>
<dbReference type="HAMAP" id="MF_00094">
    <property type="entry name" value="Rel_fac_2"/>
    <property type="match status" value="1"/>
</dbReference>
<dbReference type="InterPro" id="IPR005139">
    <property type="entry name" value="PCRF"/>
</dbReference>
<dbReference type="InterPro" id="IPR000352">
    <property type="entry name" value="Pep_chain_release_fac_I"/>
</dbReference>
<dbReference type="InterPro" id="IPR045853">
    <property type="entry name" value="Pep_chain_release_fac_I_sf"/>
</dbReference>
<dbReference type="InterPro" id="IPR004374">
    <property type="entry name" value="PrfB"/>
</dbReference>
<dbReference type="NCBIfam" id="TIGR00020">
    <property type="entry name" value="prfB"/>
    <property type="match status" value="1"/>
</dbReference>
<dbReference type="PANTHER" id="PTHR43116:SF3">
    <property type="entry name" value="CLASS I PEPTIDE CHAIN RELEASE FACTOR"/>
    <property type="match status" value="1"/>
</dbReference>
<dbReference type="PANTHER" id="PTHR43116">
    <property type="entry name" value="PEPTIDE CHAIN RELEASE FACTOR 2"/>
    <property type="match status" value="1"/>
</dbReference>
<dbReference type="Pfam" id="PF03462">
    <property type="entry name" value="PCRF"/>
    <property type="match status" value="1"/>
</dbReference>
<dbReference type="Pfam" id="PF00472">
    <property type="entry name" value="RF-1"/>
    <property type="match status" value="1"/>
</dbReference>
<dbReference type="SMART" id="SM00937">
    <property type="entry name" value="PCRF"/>
    <property type="match status" value="1"/>
</dbReference>
<dbReference type="SUPFAM" id="SSF75620">
    <property type="entry name" value="Release factor"/>
    <property type="match status" value="1"/>
</dbReference>
<dbReference type="PROSITE" id="PS00745">
    <property type="entry name" value="RF_PROK_I"/>
    <property type="match status" value="1"/>
</dbReference>
<proteinExistence type="inferred from homology"/>
<reference key="1">
    <citation type="journal article" date="2000" name="Science">
        <title>Complete genome sequence of Neisseria meningitidis serogroup B strain MC58.</title>
        <authorList>
            <person name="Tettelin H."/>
            <person name="Saunders N.J."/>
            <person name="Heidelberg J.F."/>
            <person name="Jeffries A.C."/>
            <person name="Nelson K.E."/>
            <person name="Eisen J.A."/>
            <person name="Ketchum K.A."/>
            <person name="Hood D.W."/>
            <person name="Peden J.F."/>
            <person name="Dodson R.J."/>
            <person name="Nelson W.C."/>
            <person name="Gwinn M.L."/>
            <person name="DeBoy R.T."/>
            <person name="Peterson J.D."/>
            <person name="Hickey E.K."/>
            <person name="Haft D.H."/>
            <person name="Salzberg S.L."/>
            <person name="White O."/>
            <person name="Fleischmann R.D."/>
            <person name="Dougherty B.A."/>
            <person name="Mason T.M."/>
            <person name="Ciecko A."/>
            <person name="Parksey D.S."/>
            <person name="Blair E."/>
            <person name="Cittone H."/>
            <person name="Clark E.B."/>
            <person name="Cotton M.D."/>
            <person name="Utterback T.R."/>
            <person name="Khouri H.M."/>
            <person name="Qin H."/>
            <person name="Vamathevan J.J."/>
            <person name="Gill J."/>
            <person name="Scarlato V."/>
            <person name="Masignani V."/>
            <person name="Pizza M."/>
            <person name="Grandi G."/>
            <person name="Sun L."/>
            <person name="Smith H.O."/>
            <person name="Fraser C.M."/>
            <person name="Moxon E.R."/>
            <person name="Rappuoli R."/>
            <person name="Venter J.C."/>
        </authorList>
    </citation>
    <scope>NUCLEOTIDE SEQUENCE [LARGE SCALE GENOMIC DNA]</scope>
    <source>
        <strain>ATCC BAA-335 / MC58</strain>
    </source>
</reference>
<feature type="chain" id="PRO_0000166835" description="Peptide chain release factor 2">
    <location>
        <begin position="1"/>
        <end position="367"/>
    </location>
</feature>
<feature type="modified residue" description="N5-methylglutamine" evidence="1">
    <location>
        <position position="254"/>
    </location>
</feature>
<name>RF2_NEIMB</name>